<feature type="chain" id="PRO_0000220987" description="Metalloproteinase inhibitor 4">
    <location>
        <begin position="1" status="less than"/>
        <end position="170" status="greater than"/>
    </location>
</feature>
<feature type="domain" description="NTR" evidence="2">
    <location>
        <begin position="1" status="less than"/>
        <end position="105"/>
    </location>
</feature>
<feature type="region of interest" description="Involved in metalloproteinase-binding" evidence="1">
    <location>
        <begin position="6"/>
        <end position="9"/>
    </location>
</feature>
<feature type="region of interest" description="Involved in metalloproteinase-binding" evidence="1">
    <location>
        <begin position="48"/>
        <end position="49"/>
    </location>
</feature>
<feature type="disulfide bond" evidence="2">
    <location>
        <begin position="107"/>
        <end position="154"/>
    </location>
</feature>
<feature type="disulfide bond" evidence="2">
    <location>
        <begin position="112"/>
        <end position="117"/>
    </location>
</feature>
<feature type="disulfide bond" evidence="2">
    <location>
        <begin position="125"/>
        <end position="146"/>
    </location>
</feature>
<feature type="non-terminal residue">
    <location>
        <position position="1"/>
    </location>
</feature>
<feature type="non-terminal residue">
    <location>
        <position position="170"/>
    </location>
</feature>
<keyword id="KW-1015">Disulfide bond</keyword>
<keyword id="KW-0481">Metalloenzyme inhibitor</keyword>
<keyword id="KW-0483">Metalloprotease inhibitor</keyword>
<keyword id="KW-0646">Protease inhibitor</keyword>
<keyword id="KW-1185">Reference proteome</keyword>
<keyword id="KW-0964">Secreted</keyword>
<reference key="1">
    <citation type="journal article" date="1998" name="Biochem. Biophys. Res. Commun.">
        <title>Temporal alterations in mRNA levels for proteinases and inhibitors and their potential regulators in the healing medial collateral ligament.</title>
        <authorList>
            <person name="Reno C."/>
            <person name="Boykiw R."/>
            <person name="Martinez M.L."/>
            <person name="Hart D.A."/>
        </authorList>
    </citation>
    <scope>NUCLEOTIDE SEQUENCE [MRNA]</scope>
    <source>
        <strain>New Zealand white</strain>
    </source>
</reference>
<proteinExistence type="evidence at transcript level"/>
<dbReference type="EMBL" id="AF069715">
    <property type="protein sequence ID" value="AAC95007.1"/>
    <property type="molecule type" value="mRNA"/>
</dbReference>
<dbReference type="SMR" id="O97591"/>
<dbReference type="STRING" id="9986.ENSOCUP00000013706"/>
<dbReference type="MEROPS" id="I35.004"/>
<dbReference type="PaxDb" id="9986-ENSOCUP00000013706"/>
<dbReference type="eggNOG" id="KOG4745">
    <property type="taxonomic scope" value="Eukaryota"/>
</dbReference>
<dbReference type="InParanoid" id="O97591"/>
<dbReference type="Proteomes" id="UP000001811">
    <property type="component" value="Unplaced"/>
</dbReference>
<dbReference type="GO" id="GO:0031012">
    <property type="term" value="C:extracellular matrix"/>
    <property type="evidence" value="ECO:0007669"/>
    <property type="project" value="TreeGrafter"/>
</dbReference>
<dbReference type="GO" id="GO:0005615">
    <property type="term" value="C:extracellular space"/>
    <property type="evidence" value="ECO:0007669"/>
    <property type="project" value="TreeGrafter"/>
</dbReference>
<dbReference type="GO" id="GO:0008191">
    <property type="term" value="F:metalloendopeptidase inhibitor activity"/>
    <property type="evidence" value="ECO:0007669"/>
    <property type="project" value="InterPro"/>
</dbReference>
<dbReference type="GO" id="GO:0002020">
    <property type="term" value="F:protease binding"/>
    <property type="evidence" value="ECO:0007669"/>
    <property type="project" value="TreeGrafter"/>
</dbReference>
<dbReference type="GO" id="GO:0051045">
    <property type="term" value="P:negative regulation of membrane protein ectodomain proteolysis"/>
    <property type="evidence" value="ECO:0007669"/>
    <property type="project" value="TreeGrafter"/>
</dbReference>
<dbReference type="GO" id="GO:0034097">
    <property type="term" value="P:response to cytokine"/>
    <property type="evidence" value="ECO:0007669"/>
    <property type="project" value="TreeGrafter"/>
</dbReference>
<dbReference type="GO" id="GO:0009725">
    <property type="term" value="P:response to hormone"/>
    <property type="evidence" value="ECO:0007669"/>
    <property type="project" value="TreeGrafter"/>
</dbReference>
<dbReference type="CDD" id="cd03585">
    <property type="entry name" value="NTR_TIMP"/>
    <property type="match status" value="1"/>
</dbReference>
<dbReference type="FunFam" id="3.90.370.10:FF:000001">
    <property type="entry name" value="Metalloproteinase inhibitor 3"/>
    <property type="match status" value="1"/>
</dbReference>
<dbReference type="FunFam" id="2.40.50.120:FF:000012">
    <property type="entry name" value="Metalloproteinase inhibitor 4"/>
    <property type="match status" value="1"/>
</dbReference>
<dbReference type="Gene3D" id="2.40.50.120">
    <property type="match status" value="1"/>
</dbReference>
<dbReference type="Gene3D" id="3.90.370.10">
    <property type="entry name" value="Tissue inhibitor of metalloproteinase-1. Chain B, domain 1"/>
    <property type="match status" value="1"/>
</dbReference>
<dbReference type="InterPro" id="IPR001134">
    <property type="entry name" value="Netrin_domain"/>
</dbReference>
<dbReference type="InterPro" id="IPR001820">
    <property type="entry name" value="TIMP"/>
</dbReference>
<dbReference type="InterPro" id="IPR008993">
    <property type="entry name" value="TIMP-like_OB-fold"/>
</dbReference>
<dbReference type="InterPro" id="IPR027465">
    <property type="entry name" value="TIMP_C"/>
</dbReference>
<dbReference type="PANTHER" id="PTHR11844">
    <property type="entry name" value="METALLOPROTEASE INHIBITOR"/>
    <property type="match status" value="1"/>
</dbReference>
<dbReference type="PANTHER" id="PTHR11844:SF26">
    <property type="entry name" value="METALLOPROTEINASE INHIBITOR 4"/>
    <property type="match status" value="1"/>
</dbReference>
<dbReference type="Pfam" id="PF00965">
    <property type="entry name" value="TIMP"/>
    <property type="match status" value="1"/>
</dbReference>
<dbReference type="SMART" id="SM00206">
    <property type="entry name" value="NTR"/>
    <property type="match status" value="1"/>
</dbReference>
<dbReference type="SUPFAM" id="SSF50242">
    <property type="entry name" value="TIMP-like"/>
    <property type="match status" value="1"/>
</dbReference>
<dbReference type="PROSITE" id="PS50189">
    <property type="entry name" value="NTR"/>
    <property type="match status" value="1"/>
</dbReference>
<comment type="function">
    <text>Complexes with metalloproteinases (such as collagenases) and irreversibly inactivates them by binding to their catalytic zinc cofactor.</text>
</comment>
<comment type="subcellular location">
    <subcellularLocation>
        <location>Secreted</location>
    </subcellularLocation>
</comment>
<comment type="similarity">
    <text evidence="3">Belongs to the protease inhibitor I35 (TIMP) family.</text>
</comment>
<organism>
    <name type="scientific">Oryctolagus cuniculus</name>
    <name type="common">Rabbit</name>
    <dbReference type="NCBI Taxonomy" id="9986"/>
    <lineage>
        <taxon>Eukaryota</taxon>
        <taxon>Metazoa</taxon>
        <taxon>Chordata</taxon>
        <taxon>Craniata</taxon>
        <taxon>Vertebrata</taxon>
        <taxon>Euteleostomi</taxon>
        <taxon>Mammalia</taxon>
        <taxon>Eutheria</taxon>
        <taxon>Euarchontoglires</taxon>
        <taxon>Glires</taxon>
        <taxon>Lagomorpha</taxon>
        <taxon>Leporidae</taxon>
        <taxon>Oryctolagus</taxon>
    </lineage>
</organism>
<evidence type="ECO:0000250" key="1">
    <source>
        <dbReference type="UniProtKB" id="P16035"/>
    </source>
</evidence>
<evidence type="ECO:0000255" key="2">
    <source>
        <dbReference type="PROSITE-ProRule" id="PRU00295"/>
    </source>
</evidence>
<evidence type="ECO:0000305" key="3"/>
<name>TIMP4_RABIT</name>
<sequence length="170" mass="19811">ISSEKVVPASADPADTQRMIRYEIKQIKMFKGFEKIKDVQYIYTPFDSSLCGVKLEANSQKQYLLTGQVLSDGKVFIHLCNYIEPWEDLSLVQRESLNHHYHLNCVCQITTCYTVPCTISAPNECLWTDWLLERKLYGYQAQHYVCMKHADGTCSWYQGRLPLRKEFVDI</sequence>
<accession>O97591</accession>
<protein>
    <recommendedName>
        <fullName>Metalloproteinase inhibitor 4</fullName>
    </recommendedName>
    <alternativeName>
        <fullName>Tissue inhibitor of metalloproteinases 4</fullName>
        <shortName>TIMP-4</shortName>
    </alternativeName>
</protein>
<gene>
    <name type="primary">TIMP4</name>
</gene>